<dbReference type="EC" id="2.7.2.16" evidence="1"/>
<dbReference type="EMBL" id="CP000742">
    <property type="protein sequence ID" value="ABR54648.1"/>
    <property type="molecule type" value="Genomic_DNA"/>
</dbReference>
<dbReference type="RefSeq" id="WP_011972550.1">
    <property type="nucleotide sequence ID" value="NC_009634.1"/>
</dbReference>
<dbReference type="SMR" id="A6UQ76"/>
<dbReference type="STRING" id="406327.Mevan_0742"/>
<dbReference type="GeneID" id="5325536"/>
<dbReference type="KEGG" id="mvn:Mevan_0742"/>
<dbReference type="eggNOG" id="arCOG01967">
    <property type="taxonomic scope" value="Archaea"/>
</dbReference>
<dbReference type="HOGENOM" id="CLU_848909_0_0_2"/>
<dbReference type="OrthoDB" id="358692at2157"/>
<dbReference type="UniPathway" id="UPA00551">
    <property type="reaction ID" value="UER00609"/>
</dbReference>
<dbReference type="Proteomes" id="UP000001107">
    <property type="component" value="Chromosome"/>
</dbReference>
<dbReference type="GO" id="GO:0005524">
    <property type="term" value="F:ATP binding"/>
    <property type="evidence" value="ECO:0007669"/>
    <property type="project" value="UniProtKB-KW"/>
</dbReference>
<dbReference type="GO" id="GO:0016301">
    <property type="term" value="F:kinase activity"/>
    <property type="evidence" value="ECO:0007669"/>
    <property type="project" value="UniProtKB-KW"/>
</dbReference>
<dbReference type="GO" id="GO:0016774">
    <property type="term" value="F:phosphotransferase activity, carboxyl group as acceptor"/>
    <property type="evidence" value="ECO:0007669"/>
    <property type="project" value="UniProtKB-UniRule"/>
</dbReference>
<dbReference type="Gene3D" id="3.40.50.300">
    <property type="entry name" value="P-loop containing nucleotide triphosphate hydrolases"/>
    <property type="match status" value="1"/>
</dbReference>
<dbReference type="HAMAP" id="MF_00769">
    <property type="entry name" value="2PGK"/>
    <property type="match status" value="1"/>
</dbReference>
<dbReference type="InterPro" id="IPR020872">
    <property type="entry name" value="2PKG"/>
</dbReference>
<dbReference type="InterPro" id="IPR005144">
    <property type="entry name" value="ATP-cone_dom"/>
</dbReference>
<dbReference type="InterPro" id="IPR027417">
    <property type="entry name" value="P-loop_NTPase"/>
</dbReference>
<dbReference type="NCBIfam" id="NF003259">
    <property type="entry name" value="PRK04220.1"/>
    <property type="match status" value="1"/>
</dbReference>
<dbReference type="PANTHER" id="PTHR33477">
    <property type="entry name" value="P-LOOP NTPASE DOMAIN-CONTAINING PROTEIN LPA1 HOMOLOG 1"/>
    <property type="match status" value="1"/>
</dbReference>
<dbReference type="PANTHER" id="PTHR33477:SF3">
    <property type="entry name" value="P-LOOP NTPASE DOMAIN-CONTAINING PROTEIN LPA1 HOMOLOG 1"/>
    <property type="match status" value="1"/>
</dbReference>
<dbReference type="Pfam" id="PF03477">
    <property type="entry name" value="ATP-cone"/>
    <property type="match status" value="1"/>
</dbReference>
<dbReference type="SUPFAM" id="SSF52540">
    <property type="entry name" value="P-loop containing nucleoside triphosphate hydrolases"/>
    <property type="match status" value="1"/>
</dbReference>
<dbReference type="PROSITE" id="PS51161">
    <property type="entry name" value="ATP_CONE"/>
    <property type="match status" value="1"/>
</dbReference>
<keyword id="KW-0067">ATP-binding</keyword>
<keyword id="KW-0418">Kinase</keyword>
<keyword id="KW-0547">Nucleotide-binding</keyword>
<keyword id="KW-0808">Transferase</keyword>
<name>PGK2_METVS</name>
<protein>
    <recommendedName>
        <fullName evidence="1">2-phosphoglycerate kinase</fullName>
        <shortName evidence="1">2PGK</shortName>
        <ecNumber evidence="1">2.7.2.16</ecNumber>
    </recommendedName>
</protein>
<accession>A6UQ76</accession>
<feature type="chain" id="PRO_1000062237" description="2-phosphoglycerate kinase">
    <location>
        <begin position="1"/>
        <end position="313"/>
    </location>
</feature>
<feature type="domain" description="ATP-cone" evidence="1">
    <location>
        <begin position="8"/>
        <end position="95"/>
    </location>
</feature>
<sequence length="313" mass="35903">MTFEEITNKILVKDKDYEMPFSKGLLTRSLTAAGMKPSESYILAREIERDLTDQGLRKISKDELRRRVYYALINRDYEDIAEKYLLWRRVLKKHSIIILVGGASGVGTSTIAFELASRLGIPSVIGTDSIREVMRRSISKDLVPMLYESSYTAWKALRHSSAEEYDTKEMHLLGFERHVEPVLIGIESIIDRSLTEGMSVILEGTHIVPGLLGEKYHSMQNVIILNLTLSSEEIHKQRFVARAKVSDRPLERYLSNFEIIKEINEYIVKKSRENKVPVIENVSISETVQKCLEIVTDRFVDLNEESEADSEIY</sequence>
<gene>
    <name evidence="1" type="primary">pgk2</name>
    <name type="ordered locus">Mevan_0742</name>
</gene>
<reference key="1">
    <citation type="submission" date="2007-06" db="EMBL/GenBank/DDBJ databases">
        <title>Complete sequence of Methanococcus vannielii SB.</title>
        <authorList>
            <consortium name="US DOE Joint Genome Institute"/>
            <person name="Copeland A."/>
            <person name="Lucas S."/>
            <person name="Lapidus A."/>
            <person name="Barry K."/>
            <person name="Glavina del Rio T."/>
            <person name="Dalin E."/>
            <person name="Tice H."/>
            <person name="Pitluck S."/>
            <person name="Chain P."/>
            <person name="Malfatti S."/>
            <person name="Shin M."/>
            <person name="Vergez L."/>
            <person name="Schmutz J."/>
            <person name="Larimer F."/>
            <person name="Land M."/>
            <person name="Hauser L."/>
            <person name="Kyrpides N."/>
            <person name="Anderson I."/>
            <person name="Sieprawska-Lupa M."/>
            <person name="Whitman W.B."/>
            <person name="Richardson P."/>
        </authorList>
    </citation>
    <scope>NUCLEOTIDE SEQUENCE [LARGE SCALE GENOMIC DNA]</scope>
    <source>
        <strain>ATCC 35089 / DSM 1224 / JCM 13029 / OCM 148 / SB</strain>
    </source>
</reference>
<evidence type="ECO:0000255" key="1">
    <source>
        <dbReference type="HAMAP-Rule" id="MF_00769"/>
    </source>
</evidence>
<proteinExistence type="inferred from homology"/>
<organism>
    <name type="scientific">Methanococcus vannielii (strain ATCC 35089 / DSM 1224 / JCM 13029 / OCM 148 / SB)</name>
    <dbReference type="NCBI Taxonomy" id="406327"/>
    <lineage>
        <taxon>Archaea</taxon>
        <taxon>Methanobacteriati</taxon>
        <taxon>Methanobacteriota</taxon>
        <taxon>Methanomada group</taxon>
        <taxon>Methanococci</taxon>
        <taxon>Methanococcales</taxon>
        <taxon>Methanococcaceae</taxon>
        <taxon>Methanococcus</taxon>
    </lineage>
</organism>
<comment type="function">
    <text evidence="1">Catalyzes the phosphorylation of 2-phosphoglycerate to 2,3-diphosphoglycerate. Involved in the biosynthesis of cyclic 2,3-bisphosphoglycerate, a thermoprotectant.</text>
</comment>
<comment type="catalytic activity">
    <reaction evidence="1">
        <text>(2R)-2-phosphoglycerate + ATP = (2R)-2,3-bisphosphoglycerate + ADP + H(+)</text>
        <dbReference type="Rhea" id="RHEA:42408"/>
        <dbReference type="ChEBI" id="CHEBI:15378"/>
        <dbReference type="ChEBI" id="CHEBI:30616"/>
        <dbReference type="ChEBI" id="CHEBI:58248"/>
        <dbReference type="ChEBI" id="CHEBI:58289"/>
        <dbReference type="ChEBI" id="CHEBI:456216"/>
        <dbReference type="EC" id="2.7.2.16"/>
    </reaction>
</comment>
<comment type="cofactor">
    <cofactor evidence="1">
        <name>a divalent metal cation</name>
        <dbReference type="ChEBI" id="CHEBI:60240"/>
    </cofactor>
</comment>
<comment type="pathway">
    <text evidence="1">Thermoadapter biosynthesis; cyclic 2,3-diphosphoglycerate biosynthesis; cyclic 2,3-diphosphoglycerate from 2-phospho-D-glycerate: step 1/2.</text>
</comment>
<comment type="similarity">
    <text evidence="1">Belongs to the 2-phosphoglycerate kinase family.</text>
</comment>